<proteinExistence type="inferred from homology"/>
<organism>
    <name type="scientific">Talaromyces marneffei (strain ATCC 18224 / CBS 334.59 / QM 7333)</name>
    <name type="common">Penicillium marneffei</name>
    <dbReference type="NCBI Taxonomy" id="441960"/>
    <lineage>
        <taxon>Eukaryota</taxon>
        <taxon>Fungi</taxon>
        <taxon>Dikarya</taxon>
        <taxon>Ascomycota</taxon>
        <taxon>Pezizomycotina</taxon>
        <taxon>Eurotiomycetes</taxon>
        <taxon>Eurotiomycetidae</taxon>
        <taxon>Eurotiales</taxon>
        <taxon>Trichocomaceae</taxon>
        <taxon>Talaromyces</taxon>
        <taxon>Talaromyces sect. Talaromyces</taxon>
    </lineage>
</organism>
<sequence>MRSLAQEGNRLLVFGPQALSAKGNDFRALQAKVAQLTWITHVITDLPNVWGDFVKEFPKYSLVSGETLLQKLIKWVDTGDIDLGTNNHLANIILSPLVIITHITEYLKYLQNGAPKTNHESSTETLGFCMGFLSALVVSVSNDSIDIERYGAAAIRLAMIIGGIVDAQDGLDAQGPSKSLATAWNSTKAAEELQQILVHFPEAYVSVSYDDQRATITTASKTVSTLQGQLRTAGIVANEIGLFGRFHNDWYAEDVDEIIDFVSSRPELVLPDATDLIYQTRSNSGTGLITSGKLHDHAIRTILVQHSNWYQTFKSIHDTQIKSLKTSVIAFGPEPCVPPSILREIKQNVIHASDIQAESIAPPPIVLPQQVKEDDIAVVGMSLKVAGADDTDEFWDLLCAGQSQHREVPRNRIKFDNDWREVGPKRKYFGNFLNDHDIFDQKFFKKSAREAASTDPQQRILLHVAYQALEQAGYFNSPEQDKRIGCFIGECANDYADNVACHQPNAFTATGNLKSFIAGKVSHYFGWTGTGLTLDTACSSSLVAVHLACKAILSGECNAALAGGVNMMNSALWFQNLAAASFLSPTGQCKPFDANADGYCRGEAVGVVFLKSMSAAIANGDQIIGTISSTGVSQNQNCTPIFVPNAPSLSTLFQDVIQDAQVDPKKISVVEAHGTGTQVGDPAEYDSIRRVLGGANLRSKPLAFGSVKGLVGHTEASSGLVSLIKILLMIQNKTIPPQASHESLNPHLNATADDKMEIITKKTTWDEDYRAALINNYGASGSNASAVVTEAPRLHESTTSATSFPVLDYPFHIFGKDDRAIRDYCTKLAKSLEAKGVNNLSIANLSFNICRQSNPTLDRGLVFTSRSVKELVEKLNAFQTGDVNVAATIVQPQLRPVVLCFGGQISTYVGLSKEVYENVRILARYLDQCDYACQSLGCESIFPGIFQRSPIEDTVKLQTMLFSIQYACGKSWIDSGVQPVAVVGHSFGELTSLCISGVLSLEYALKMIVGRATIIRESWGSEKGAMMAIEADQEEVQKLLAETSLPCEEAGQRAPTIACLNGPRSFTIAGSSRAIDIAGETISKNPAYSRFRFKKLNVTNAFHSTLVEPLMSDLEKVGQSLQFNEPSIHLERATEFYSSERLAARYVADHMRNPVFFNHAVQRISKKYPDAIFVEAGSNSTITNMASRALGSPVASHFQPVNITTDNGLQLLVDSTASLWKQGLMVPFWAHSRVQTYEYSPVFLPAYQFEKLRHWMEPVPPPTSSKQVVGGQAEEPKGLWSFIDYMDEKKRGARFRINTETDKYKELVSGHIIAQTAPICPATVEVDIAVEALISLYSNFATSGLQPRICNVDNQSPICIDSSRSVWLDVESQESAPNNWSWRIVSTGESSKASTVHVTGQIIFVSTDNAEWQLEFSRYERLIGHQRCVGLLNCDDADDIIQGRNIYRSFGEVVDYSAPYRGLQKLVGKGTESAGRVVKKYTGDSWLDALLSDAFSQVGGIWVNCMTDKDPGDMYIATGFEKWMRSPDITTDYKRPEAWDVFAYHQELPLEHSYLTDIFIFDSTNGKLTEVILGVNYHKVAKATMSKILARLSGLPTTSTSTNVKSSPAAAEGSSPVENGASGSGSKAKKTKSGAGQDVVNKTKGLLAEISGMGVEEISNEAQLADIGIDSLMGMELARELEGMFKCTLPSDELMNVTDFAGLVQIIKSTLGVSDDEEGSDQEGSEASSSESSTTFTPSTTATTVSDVEDNGNEKSIGKEKSVSYTGDLQLPSSTIIEAFEESRKLTDDFIANYRCADYMETVLPRQTQLCVALTVEAFEQLGCPIRSAKAGDILTRIPHDPQHQRLTNYLHKMLEEEARLIDTDGSKITRTAIAPPSKSSDAILEQLLRDFPDHEWANKLTHFAGSRLADVLKGECDGIKLIFGSDEGRRLVTGLYGDSLLNKLANVQMQDIVARVASKMPQDQGPLKILELGAGTGGTTKGMVALLAKLGVPVEYTFTDLSGSFVAAARKTFKEYPFMKYKVHDIEKSPPADLVGTQHIIIASNAMHATHNLEISTANVRKALRPDGFLMMLEMTSPVFWVDLIFGLFEGWWLFDDGREHAIGHQTLWERIMRAAGYGHIDWTDGNSPELEIQRVIIALASGPQYDRQPVAPLPQPEKQLQPAAGRKAAVDEYVRKYTEGFSLGERVERATSPSQYEQCVLITGATGSLGSHLVAHVAALPNVKTVVCLNRRSGSDANARQQKALEDRGILIDAASQSKLQVFQVTTSKPLLGLEKSDYEELLGKVTHIVHNAWPMTGKRPLSGLESQFQVMRNLIDFARDISAHRSKGSKVTLQLISSIAVVGHYPLWSGNVEVPEERMTLESVLPNGYGDAKFVCERMLEETLHKYPEQFRVMSVRPGQIAGSKVTGYWNAMEHLSFLFKSSQTLKVLPDFEGDLCWTPVDDVAGTCSDLLISDREPYLVYHIDNPVRQPWKEMIPLLAELLDIPRTNIVPFKEWVRRVRAFPGSVEWDNPAALLIDFLDDNFLRMSCGGLLLGTAKSCEHSPTLAAVGPVSVEVTKKYIQSWKNSGFLHK</sequence>
<name>PKS11_TALMQ</name>
<keyword id="KW-0012">Acyltransferase</keyword>
<keyword id="KW-0489">Methyltransferase</keyword>
<keyword id="KW-0511">Multifunctional enzyme</keyword>
<keyword id="KW-0521">NADP</keyword>
<keyword id="KW-0596">Phosphopantetheine</keyword>
<keyword id="KW-0597">Phosphoprotein</keyword>
<keyword id="KW-1185">Reference proteome</keyword>
<keyword id="KW-0808">Transferase</keyword>
<keyword id="KW-0843">Virulence</keyword>
<feature type="chain" id="PRO_0000460604" description="Non-reducing polyketide synthase pks11">
    <location>
        <begin position="1"/>
        <end position="2575"/>
    </location>
</feature>
<feature type="domain" description="Starter acyltransferase (SAT)" evidence="3">
    <location>
        <begin position="89"/>
        <end position="228"/>
    </location>
</feature>
<feature type="domain" description="Ketosynthase family 3 (KS3)" evidence="5">
    <location>
        <begin position="373"/>
        <end position="790"/>
    </location>
</feature>
<feature type="domain" description="Malonyl-CoA:ACP transacylase (MAT)" evidence="3">
    <location>
        <begin position="901"/>
        <end position="1192"/>
    </location>
</feature>
<feature type="domain" description="PKS/mFAS DH" evidence="6">
    <location>
        <begin position="1276"/>
        <end position="1586"/>
    </location>
</feature>
<feature type="domain" description="Carrier" evidence="4">
    <location>
        <begin position="1637"/>
        <end position="1711"/>
    </location>
</feature>
<feature type="domain" description="Thioester reductase (TE)" evidence="3">
    <location>
        <begin position="2204"/>
        <end position="2448"/>
    </location>
</feature>
<feature type="region of interest" description="N-terminal hotdog fold" evidence="6">
    <location>
        <begin position="1276"/>
        <end position="1409"/>
    </location>
</feature>
<feature type="region of interest" description="Product template (PT) domain" evidence="2 3">
    <location>
        <begin position="1307"/>
        <end position="1584"/>
    </location>
</feature>
<feature type="region of interest" description="C-terminal hotdog fold" evidence="6">
    <location>
        <begin position="1437"/>
        <end position="1586"/>
    </location>
</feature>
<feature type="region of interest" description="Disordered" evidence="7">
    <location>
        <begin position="1597"/>
        <end position="1636"/>
    </location>
</feature>
<feature type="region of interest" description="Disordered" evidence="7">
    <location>
        <begin position="1713"/>
        <end position="1762"/>
    </location>
</feature>
<feature type="region of interest" description="Methyltransferase domain" evidence="3">
    <location>
        <begin position="1835"/>
        <end position="2130"/>
    </location>
</feature>
<feature type="compositionally biased region" description="Polar residues" evidence="7">
    <location>
        <begin position="1597"/>
        <end position="1606"/>
    </location>
</feature>
<feature type="compositionally biased region" description="Acidic residues" evidence="7">
    <location>
        <begin position="1714"/>
        <end position="1724"/>
    </location>
</feature>
<feature type="compositionally biased region" description="Low complexity" evidence="7">
    <location>
        <begin position="1725"/>
        <end position="1746"/>
    </location>
</feature>
<feature type="compositionally biased region" description="Basic and acidic residues" evidence="7">
    <location>
        <begin position="1752"/>
        <end position="1762"/>
    </location>
</feature>
<feature type="active site" description="Nucleophile; for transacylase activity" evidence="1">
    <location>
        <position position="129"/>
    </location>
</feature>
<feature type="active site" description="Proton donor/acceptor; for transacylase activity" evidence="1">
    <location>
        <position position="247"/>
    </location>
</feature>
<feature type="active site" description="For beta-ketoacyl synthase activity" evidence="5">
    <location>
        <position position="538"/>
    </location>
</feature>
<feature type="active site" description="For beta-ketoacyl synthase activity" evidence="5">
    <location>
        <position position="673"/>
    </location>
</feature>
<feature type="active site" description="For beta-ketoacyl synthase activity" evidence="5">
    <location>
        <position position="713"/>
    </location>
</feature>
<feature type="active site" description="Proton acceptor; for dehydratase activity" evidence="6">
    <location>
        <position position="1311"/>
    </location>
</feature>
<feature type="active site" description="Proton donor; for dehydratase activity" evidence="6">
    <location>
        <position position="1493"/>
    </location>
</feature>
<feature type="modified residue" description="O-(pantetheine 4'-phosphoryl)serine" evidence="4">
    <location>
        <position position="1671"/>
    </location>
</feature>
<protein>
    <recommendedName>
        <fullName evidence="9">Non-reducing polyketide synthase pks11</fullName>
        <shortName evidence="9">NR-PKS pks11</shortName>
        <ecNumber evidence="12">2.3.1.-</ecNumber>
    </recommendedName>
    <alternativeName>
        <fullName evidence="10">Mitorubrinol and mitorubrinic acid biosynthesis cluster protein pks11</fullName>
    </alternativeName>
</protein>
<dbReference type="EC" id="2.3.1.-" evidence="12"/>
<dbReference type="EMBL" id="DS995902">
    <property type="protein sequence ID" value="EEA23570.1"/>
    <property type="molecule type" value="Genomic_DNA"/>
</dbReference>
<dbReference type="RefSeq" id="XP_002149737.1">
    <property type="nucleotide sequence ID" value="XM_002149701.1"/>
</dbReference>
<dbReference type="SMR" id="B6QK76"/>
<dbReference type="STRING" id="441960.B6QK76"/>
<dbReference type="VEuPathDB" id="FungiDB:PMAA_101550"/>
<dbReference type="HOGENOM" id="CLU_000022_6_2_1"/>
<dbReference type="OrthoDB" id="4334at28568"/>
<dbReference type="PhylomeDB" id="B6QK76"/>
<dbReference type="Proteomes" id="UP000001294">
    <property type="component" value="Unassembled WGS sequence"/>
</dbReference>
<dbReference type="GO" id="GO:0016746">
    <property type="term" value="F:acyltransferase activity"/>
    <property type="evidence" value="ECO:0007669"/>
    <property type="project" value="UniProtKB-KW"/>
</dbReference>
<dbReference type="GO" id="GO:0008168">
    <property type="term" value="F:methyltransferase activity"/>
    <property type="evidence" value="ECO:0007669"/>
    <property type="project" value="UniProtKB-KW"/>
</dbReference>
<dbReference type="GO" id="GO:0009058">
    <property type="term" value="P:biosynthetic process"/>
    <property type="evidence" value="ECO:0007669"/>
    <property type="project" value="UniProtKB-ARBA"/>
</dbReference>
<dbReference type="GO" id="GO:0032259">
    <property type="term" value="P:methylation"/>
    <property type="evidence" value="ECO:0007669"/>
    <property type="project" value="UniProtKB-KW"/>
</dbReference>
<dbReference type="CDD" id="cd00833">
    <property type="entry name" value="PKS"/>
    <property type="match status" value="1"/>
</dbReference>
<dbReference type="Gene3D" id="3.30.70.3290">
    <property type="match status" value="1"/>
</dbReference>
<dbReference type="Gene3D" id="3.40.47.10">
    <property type="match status" value="1"/>
</dbReference>
<dbReference type="Gene3D" id="1.10.1200.10">
    <property type="entry name" value="ACP-like"/>
    <property type="match status" value="1"/>
</dbReference>
<dbReference type="Gene3D" id="3.40.366.10">
    <property type="entry name" value="Malonyl-Coenzyme A Acyl Carrier Protein, domain 2"/>
    <property type="match status" value="2"/>
</dbReference>
<dbReference type="Gene3D" id="3.40.50.720">
    <property type="entry name" value="NAD(P)-binding Rossmann-like Domain"/>
    <property type="match status" value="1"/>
</dbReference>
<dbReference type="Gene3D" id="3.10.129.110">
    <property type="entry name" value="Polyketide synthase dehydratase"/>
    <property type="match status" value="1"/>
</dbReference>
<dbReference type="Gene3D" id="3.40.50.150">
    <property type="entry name" value="Vaccinia Virus protein VP39"/>
    <property type="match status" value="1"/>
</dbReference>
<dbReference type="InterPro" id="IPR001227">
    <property type="entry name" value="Ac_transferase_dom_sf"/>
</dbReference>
<dbReference type="InterPro" id="IPR036736">
    <property type="entry name" value="ACP-like_sf"/>
</dbReference>
<dbReference type="InterPro" id="IPR014043">
    <property type="entry name" value="Acyl_transferase_dom"/>
</dbReference>
<dbReference type="InterPro" id="IPR016035">
    <property type="entry name" value="Acyl_Trfase/lysoPLipase"/>
</dbReference>
<dbReference type="InterPro" id="IPR013120">
    <property type="entry name" value="Far_NAD-bd"/>
</dbReference>
<dbReference type="InterPro" id="IPR014031">
    <property type="entry name" value="Ketoacyl_synth_C"/>
</dbReference>
<dbReference type="InterPro" id="IPR014030">
    <property type="entry name" value="Ketoacyl_synth_N"/>
</dbReference>
<dbReference type="InterPro" id="IPR016036">
    <property type="entry name" value="Malonyl_transacylase_ACP-bd"/>
</dbReference>
<dbReference type="InterPro" id="IPR013217">
    <property type="entry name" value="Methyltransf_12"/>
</dbReference>
<dbReference type="InterPro" id="IPR036291">
    <property type="entry name" value="NAD(P)-bd_dom_sf"/>
</dbReference>
<dbReference type="InterPro" id="IPR020841">
    <property type="entry name" value="PKS_Beta-ketoAc_synthase_dom"/>
</dbReference>
<dbReference type="InterPro" id="IPR042104">
    <property type="entry name" value="PKS_dehydratase_sf"/>
</dbReference>
<dbReference type="InterPro" id="IPR049900">
    <property type="entry name" value="PKS_mFAS_DH"/>
</dbReference>
<dbReference type="InterPro" id="IPR050444">
    <property type="entry name" value="Polyketide_Synthase"/>
</dbReference>
<dbReference type="InterPro" id="IPR009081">
    <property type="entry name" value="PP-bd_ACP"/>
</dbReference>
<dbReference type="InterPro" id="IPR006162">
    <property type="entry name" value="Ppantetheine_attach_site"/>
</dbReference>
<dbReference type="InterPro" id="IPR029063">
    <property type="entry name" value="SAM-dependent_MTases_sf"/>
</dbReference>
<dbReference type="InterPro" id="IPR032088">
    <property type="entry name" value="SAT"/>
</dbReference>
<dbReference type="InterPro" id="IPR016039">
    <property type="entry name" value="Thiolase-like"/>
</dbReference>
<dbReference type="PANTHER" id="PTHR45681:SF6">
    <property type="entry name" value="POLYKETIDE SYNTHASE 37"/>
    <property type="match status" value="1"/>
</dbReference>
<dbReference type="PANTHER" id="PTHR45681">
    <property type="entry name" value="POLYKETIDE SYNTHASE 44-RELATED"/>
    <property type="match status" value="1"/>
</dbReference>
<dbReference type="Pfam" id="PF00698">
    <property type="entry name" value="Acyl_transf_1"/>
    <property type="match status" value="1"/>
</dbReference>
<dbReference type="Pfam" id="PF18558">
    <property type="entry name" value="HTH_51"/>
    <property type="match status" value="1"/>
</dbReference>
<dbReference type="Pfam" id="PF00109">
    <property type="entry name" value="ketoacyl-synt"/>
    <property type="match status" value="1"/>
</dbReference>
<dbReference type="Pfam" id="PF02801">
    <property type="entry name" value="Ketoacyl-synt_C"/>
    <property type="match status" value="1"/>
</dbReference>
<dbReference type="Pfam" id="PF08242">
    <property type="entry name" value="Methyltransf_12"/>
    <property type="match status" value="1"/>
</dbReference>
<dbReference type="Pfam" id="PF07993">
    <property type="entry name" value="NAD_binding_4"/>
    <property type="match status" value="1"/>
</dbReference>
<dbReference type="Pfam" id="PF00550">
    <property type="entry name" value="PP-binding"/>
    <property type="match status" value="1"/>
</dbReference>
<dbReference type="Pfam" id="PF16073">
    <property type="entry name" value="SAT"/>
    <property type="match status" value="1"/>
</dbReference>
<dbReference type="SMART" id="SM00827">
    <property type="entry name" value="PKS_AT"/>
    <property type="match status" value="1"/>
</dbReference>
<dbReference type="SMART" id="SM00825">
    <property type="entry name" value="PKS_KS"/>
    <property type="match status" value="1"/>
</dbReference>
<dbReference type="SUPFAM" id="SSF47336">
    <property type="entry name" value="ACP-like"/>
    <property type="match status" value="1"/>
</dbReference>
<dbReference type="SUPFAM" id="SSF52151">
    <property type="entry name" value="FabD/lysophospholipase-like"/>
    <property type="match status" value="1"/>
</dbReference>
<dbReference type="SUPFAM" id="SSF51735">
    <property type="entry name" value="NAD(P)-binding Rossmann-fold domains"/>
    <property type="match status" value="1"/>
</dbReference>
<dbReference type="SUPFAM" id="SSF55048">
    <property type="entry name" value="Probable ACP-binding domain of malonyl-CoA ACP transacylase"/>
    <property type="match status" value="1"/>
</dbReference>
<dbReference type="SUPFAM" id="SSF53335">
    <property type="entry name" value="S-adenosyl-L-methionine-dependent methyltransferases"/>
    <property type="match status" value="1"/>
</dbReference>
<dbReference type="SUPFAM" id="SSF53901">
    <property type="entry name" value="Thiolase-like"/>
    <property type="match status" value="1"/>
</dbReference>
<dbReference type="PROSITE" id="PS50075">
    <property type="entry name" value="CARRIER"/>
    <property type="match status" value="1"/>
</dbReference>
<dbReference type="PROSITE" id="PS52004">
    <property type="entry name" value="KS3_2"/>
    <property type="match status" value="1"/>
</dbReference>
<dbReference type="PROSITE" id="PS00012">
    <property type="entry name" value="PHOSPHOPANTETHEINE"/>
    <property type="match status" value="1"/>
</dbReference>
<dbReference type="PROSITE" id="PS52019">
    <property type="entry name" value="PKS_MFAS_DH"/>
    <property type="match status" value="1"/>
</dbReference>
<dbReference type="PROSITE" id="PS00098">
    <property type="entry name" value="THIOLASE_1"/>
    <property type="match status" value="1"/>
</dbReference>
<comment type="function">
    <text evidence="8 12">Non-reducing polyketide synthase; part of the gene cluster that mediates the biosynthesis of mitorubrinol and mitorubrinic acid, two virulence factors that improve T.marneffei intracellular survival in macrophages (PubMed:23094121). The two polyketide synthases pks12 and pks11 are probably responsible for sequential use in the biosynthesis of mitorubrinol and mitorubrinic acid. The first part of the biosynthesis is probably catalyzed by pks12, which synthesized orsellinic acid. This tetraketide is then used as a starter unit for pks11, which possesses a SAT domain, in the second part of the biosynthesis. Pks11, contains a methyltransferase domain, also served that methylates the products, using a methyl group from S-adenosylmethionine (Probable).</text>
</comment>
<comment type="cofactor">
    <cofactor evidence="3">
        <name>pantetheine 4'-phosphate</name>
        <dbReference type="ChEBI" id="CHEBI:47942"/>
    </cofactor>
    <text evidence="3">Binds 1 phosphopantetheine covalently.</text>
</comment>
<comment type="pathway">
    <text evidence="8">Secondary metabolite biosynthesis.</text>
</comment>
<comment type="domain">
    <text evidence="11">Multidomain protein; including a starter unit:ACP transacylase (SAT) that selects the starter unit, a ketosynthase (KS) that catalyzes repeated decarboxylative condensation to elongate the polyketide backbone, a malonyl-CoA:ACP transacylase (MAT) that selects and transfers the extender unit malonyl-CoA, a product template (PT) domain that controls the immediate cyclization regioselectivity of the reactive polyketide backbone, an acyl-carrier protein (ACP) that serves as the tether of the growing and completed polyketide via its phosphopantetheinyl arm, a methyltransferase domain and a reductive NADPH-binding domain that is required for NADPH-dependent product release.</text>
</comment>
<comment type="disruption phenotype">
    <text evidence="8">Leads to the loss of the yellow composed of mitorubrinic acid and mitorubrinol (PubMed:23094121). Increases the survival of mice challenged with T.marneffei and decreases decrease survival of T.marneffei in both J774 and THP1 macrophages (PubMed:23094121).</text>
</comment>
<gene>
    <name evidence="9" type="primary">pks11</name>
    <name type="ORF">PMAA_101550</name>
</gene>
<evidence type="ECO:0000250" key="1">
    <source>
        <dbReference type="UniProtKB" id="A0A0K0MCJ4"/>
    </source>
</evidence>
<evidence type="ECO:0000250" key="2">
    <source>
        <dbReference type="UniProtKB" id="A2QTE9"/>
    </source>
</evidence>
<evidence type="ECO:0000255" key="3"/>
<evidence type="ECO:0000255" key="4">
    <source>
        <dbReference type="PROSITE-ProRule" id="PRU00258"/>
    </source>
</evidence>
<evidence type="ECO:0000255" key="5">
    <source>
        <dbReference type="PROSITE-ProRule" id="PRU01348"/>
    </source>
</evidence>
<evidence type="ECO:0000255" key="6">
    <source>
        <dbReference type="PROSITE-ProRule" id="PRU01363"/>
    </source>
</evidence>
<evidence type="ECO:0000256" key="7">
    <source>
        <dbReference type="SAM" id="MobiDB-lite"/>
    </source>
</evidence>
<evidence type="ECO:0000269" key="8">
    <source>
    </source>
</evidence>
<evidence type="ECO:0000303" key="9">
    <source>
    </source>
</evidence>
<evidence type="ECO:0000303" key="10">
    <source>
    </source>
</evidence>
<evidence type="ECO:0000305" key="11">
    <source>
    </source>
</evidence>
<evidence type="ECO:0000305" key="12">
    <source>
    </source>
</evidence>
<accession>B6QK76</accession>
<reference key="1">
    <citation type="journal article" date="2015" name="Genome Announc.">
        <title>Genome sequence of the AIDS-associated pathogen Penicillium marneffei (ATCC18224) and its near taxonomic relative Talaromyces stipitatus (ATCC10500).</title>
        <authorList>
            <person name="Nierman W.C."/>
            <person name="Fedorova-Abrams N.D."/>
            <person name="Andrianopoulos A."/>
        </authorList>
    </citation>
    <scope>NUCLEOTIDE SEQUENCE [LARGE SCALE GENOMIC DNA]</scope>
    <source>
        <strain>ATCC 18224 / CBS 334.59 / QM 7333</strain>
    </source>
</reference>
<reference key="2">
    <citation type="journal article" date="2010" name="FEBS J.">
        <title>High diversity of polyketide synthase genes and the melanin biosynthesis gene cluster in Penicillium marneffei.</title>
        <authorList>
            <person name="Woo P.C."/>
            <person name="Tam E.W."/>
            <person name="Chong K.T."/>
            <person name="Cai J.J."/>
            <person name="Tung E.T."/>
            <person name="Ngan A.H."/>
            <person name="Lau S.K."/>
            <person name="Yuen K.Y."/>
        </authorList>
    </citation>
    <scope>IDENTIFICATION</scope>
    <scope>DOMAIN</scope>
</reference>
<reference key="3">
    <citation type="journal article" date="2012" name="PLoS Negl. Trop. Dis.">
        <title>First discovery of two polyketide synthase genes for mitorubrinic acid and mitorubrinol yellow pigment biosynthesis and implications in virulence of Penicillium marneffei.</title>
        <authorList>
            <person name="Woo P.C."/>
            <person name="Lam C.W."/>
            <person name="Tam E.W."/>
            <person name="Leung C.K."/>
            <person name="Wong S.S."/>
            <person name="Lau S.K."/>
            <person name="Yuen K.Y."/>
        </authorList>
    </citation>
    <scope>FUNCTION</scope>
    <scope>DISRUPTION PHENOTYPE</scope>
    <scope>PATHWAY</scope>
</reference>